<keyword id="KW-0966">Cell projection</keyword>
<keyword id="KW-0969">Cilium</keyword>
<keyword id="KW-0970">Cilium biogenesis/degradation</keyword>
<keyword id="KW-0282">Flagellum</keyword>
<keyword id="KW-0433">Leucine-rich repeat</keyword>
<keyword id="KW-1185">Reference proteome</keyword>
<keyword id="KW-0677">Repeat</keyword>
<proteinExistence type="evidence at protein level"/>
<protein>
    <recommendedName>
        <fullName evidence="4">Leucine-rich repeat-containing protein 56 homolog</fullName>
    </recommendedName>
</protein>
<evidence type="ECO:0000255" key="1"/>
<evidence type="ECO:0000256" key="2">
    <source>
        <dbReference type="SAM" id="MobiDB-lite"/>
    </source>
</evidence>
<evidence type="ECO:0000269" key="3">
    <source>
    </source>
</evidence>
<evidence type="ECO:0000303" key="4">
    <source>
    </source>
</evidence>
<evidence type="ECO:0000305" key="5"/>
<evidence type="ECO:0000312" key="6">
    <source>
        <dbReference type="EMBL" id="EAN78887.1"/>
    </source>
</evidence>
<organism>
    <name type="scientific">Trypanosoma brucei brucei (strain 927/4 GUTat10.1)</name>
    <dbReference type="NCBI Taxonomy" id="185431"/>
    <lineage>
        <taxon>Eukaryota</taxon>
        <taxon>Discoba</taxon>
        <taxon>Euglenozoa</taxon>
        <taxon>Kinetoplastea</taxon>
        <taxon>Metakinetoplastina</taxon>
        <taxon>Trypanosomatida</taxon>
        <taxon>Trypanosomatidae</taxon>
        <taxon>Trypanosoma</taxon>
    </lineage>
</organism>
<reference key="1">
    <citation type="journal article" date="2005" name="Science">
        <title>The genome of the African trypanosome Trypanosoma brucei.</title>
        <authorList>
            <person name="Berriman M."/>
            <person name="Ghedin E."/>
            <person name="Hertz-Fowler C."/>
            <person name="Blandin G."/>
            <person name="Renauld H."/>
            <person name="Bartholomeu D.C."/>
            <person name="Lennard N.J."/>
            <person name="Caler E."/>
            <person name="Hamlin N.E."/>
            <person name="Haas B."/>
            <person name="Bohme U."/>
            <person name="Hannick L."/>
            <person name="Aslett M.A."/>
            <person name="Shallom J."/>
            <person name="Marcello L."/>
            <person name="Hou L."/>
            <person name="Wickstead B."/>
            <person name="Alsmark U.C.M."/>
            <person name="Arrowsmith C."/>
            <person name="Atkin R.J."/>
            <person name="Barron A.J."/>
            <person name="Bringaud F."/>
            <person name="Brooks K."/>
            <person name="Carrington M."/>
            <person name="Cherevach I."/>
            <person name="Chillingworth T.J."/>
            <person name="Churcher C."/>
            <person name="Clark L.N."/>
            <person name="Corton C.H."/>
            <person name="Cronin A."/>
            <person name="Davies R.M."/>
            <person name="Doggett J."/>
            <person name="Djikeng A."/>
            <person name="Feldblyum T."/>
            <person name="Field M.C."/>
            <person name="Fraser A."/>
            <person name="Goodhead I."/>
            <person name="Hance Z."/>
            <person name="Harper D."/>
            <person name="Harris B.R."/>
            <person name="Hauser H."/>
            <person name="Hostetler J."/>
            <person name="Ivens A."/>
            <person name="Jagels K."/>
            <person name="Johnson D."/>
            <person name="Johnson J."/>
            <person name="Jones K."/>
            <person name="Kerhornou A.X."/>
            <person name="Koo H."/>
            <person name="Larke N."/>
            <person name="Landfear S."/>
            <person name="Larkin C."/>
            <person name="Leech V."/>
            <person name="Line A."/>
            <person name="Lord A."/>
            <person name="Macleod A."/>
            <person name="Mooney P.J."/>
            <person name="Moule S."/>
            <person name="Martin D.M."/>
            <person name="Morgan G.W."/>
            <person name="Mungall K."/>
            <person name="Norbertczak H."/>
            <person name="Ormond D."/>
            <person name="Pai G."/>
            <person name="Peacock C.S."/>
            <person name="Peterson J."/>
            <person name="Quail M.A."/>
            <person name="Rabbinowitsch E."/>
            <person name="Rajandream M.A."/>
            <person name="Reitter C."/>
            <person name="Salzberg S.L."/>
            <person name="Sanders M."/>
            <person name="Schobel S."/>
            <person name="Sharp S."/>
            <person name="Simmonds M."/>
            <person name="Simpson A.J."/>
            <person name="Tallon L."/>
            <person name="Turner C.M."/>
            <person name="Tait A."/>
            <person name="Tivey A.R."/>
            <person name="Van Aken S."/>
            <person name="Walker D."/>
            <person name="Wanless D."/>
            <person name="Wang S."/>
            <person name="White B."/>
            <person name="White O."/>
            <person name="Whitehead S."/>
            <person name="Woodward J."/>
            <person name="Wortman J."/>
            <person name="Adams M.D."/>
            <person name="Embley T.M."/>
            <person name="Gull K."/>
            <person name="Ullu E."/>
            <person name="Barry J.D."/>
            <person name="Fairlamb A.H."/>
            <person name="Opperdoes F."/>
            <person name="Barrell B.G."/>
            <person name="Donelson J.E."/>
            <person name="Hall N."/>
            <person name="Fraser C.M."/>
            <person name="Melville S.E."/>
            <person name="El-Sayed N.M.A."/>
        </authorList>
    </citation>
    <scope>NUCLEOTIDE SEQUENCE [LARGE SCALE GENOMIC DNA]</scope>
    <source>
        <strain>927/4 GUTat10.1</strain>
    </source>
</reference>
<reference key="2">
    <citation type="journal article" date="2018" name="Am. J. Hum. Genet.">
        <title>Biallelic mutations in LRRC56, encoding a protein associated with intraflagellar transport, cause mucociliary clearance and laterality defects.</title>
        <authorList>
            <consortium name="Care4Rare Canada Consortium"/>
            <person name="Bonnefoy S."/>
            <person name="Watson C.M."/>
            <person name="Kernohan K.D."/>
            <person name="Lemos M."/>
            <person name="Hutchinson S."/>
            <person name="Poulter J.A."/>
            <person name="Crinnion L.A."/>
            <person name="Berry I."/>
            <person name="Simmonds J."/>
            <person name="Vasudevan P."/>
            <person name="O'Callaghan C."/>
            <person name="Hirst R.A."/>
            <person name="Rutman A."/>
            <person name="Huang L."/>
            <person name="Hartley T."/>
            <person name="Grynspan D."/>
            <person name="Moya E."/>
            <person name="Li C."/>
            <person name="Carr I.M."/>
            <person name="Bonthron D.T."/>
            <person name="Leroux M."/>
            <person name="Boycott K.M."/>
            <person name="Bastin P."/>
            <person name="Sheridan E.G."/>
        </authorList>
    </citation>
    <scope>FUNCTION</scope>
    <scope>SUBCELLULAR LOCATION</scope>
    <scope>DISRUPTION PHENOTYPE</scope>
    <scope>MUTAGENESIS OF LEU-259</scope>
</reference>
<name>LRC56_TRYB2</name>
<sequence length="751" mass="81909">MKKSTVLDARPTGPLPRRPQQPSPVEVRNSSQVEKNNARGSWRKLSPLGRQQEEQGGLIHSQSQSLDTSFAPNTNTTLGSTDVNLNSGVRDRPSPRHSIMHRRETRPLLPSNPTDSGVYASEDCGSSSAGFPRFSSMGNIDKSRDNGQLPDGLCTGGSEVTHSSAVHGEAITDELLRRLTRCSDLKSVSSAQFQLDFGTLRCVESISARMPQLNSLKLNNSRITELRVLGTNYANLRRLWISNCLVSSVSGVGACAPVLEELYASFNSISDIDALTEVSSTLQVVDLEGNDIRDTDMLKRTLPQLKKMKHLVLKGNPVASSETIVELSHSSEEKGTRQRKVSYSKLIGHLMPDLQYLDDAEISNTSLQKSARVQKKHHSAHVDPLEICIRDEYLFVQECIRECGFDALGASGADEMHGSCSRSNVSLISSRSHQLKQNRPSYDRNRPSVAVRSLRKNSQSTASSGDSTNQGCDGGKPRPSCQRWGPTQRTSRLFTGRVTSVGAPKARCRQLPPLKETPASPSTEGLGNEPGNDGQRQQESGAMMQLALKPVPPDANSTRGERKQQNTTSPICGLTAAKGNVYAFDVCDDDDDELEKSKESLMHRVRLGNSATSQQATFMGSGTAKSTNSELADSGLSFLLHRLSTCTHPSGADPPDQRNEQQQEQPTTAGATSRCLDDLETPGDGPLESLNGTPEKDWEWRRELMQSVVDIRKMTSEAALKERVQGSKEVDGGGLEKVESEDEEDVSPVVF</sequence>
<dbReference type="EMBL" id="CM000208">
    <property type="protein sequence ID" value="EAN78887.1"/>
    <property type="molecule type" value="Genomic_DNA"/>
</dbReference>
<dbReference type="RefSeq" id="XP_827999.1">
    <property type="nucleotide sequence ID" value="XM_822906.1"/>
</dbReference>
<dbReference type="SMR" id="Q387Y5"/>
<dbReference type="STRING" id="185431.Q387Y5"/>
<dbReference type="PaxDb" id="5691-EAN78887"/>
<dbReference type="GeneID" id="3662775"/>
<dbReference type="KEGG" id="tbr:Tb10.61.1230"/>
<dbReference type="VEuPathDB" id="TriTrypDB:Tb927.10.15260"/>
<dbReference type="eggNOG" id="KOG0531">
    <property type="taxonomic scope" value="Eukaryota"/>
</dbReference>
<dbReference type="InParanoid" id="Q387Y5"/>
<dbReference type="OMA" id="NDIADCA"/>
<dbReference type="OrthoDB" id="676979at2759"/>
<dbReference type="Proteomes" id="UP000008524">
    <property type="component" value="Chromosome 10"/>
</dbReference>
<dbReference type="GO" id="GO:0060170">
    <property type="term" value="C:ciliary membrane"/>
    <property type="evidence" value="ECO:0000314"/>
    <property type="project" value="GeneDB"/>
</dbReference>
<dbReference type="GO" id="GO:0031514">
    <property type="term" value="C:motile cilium"/>
    <property type="evidence" value="ECO:0007669"/>
    <property type="project" value="UniProtKB-SubCell"/>
</dbReference>
<dbReference type="GO" id="GO:0030030">
    <property type="term" value="P:cell projection organization"/>
    <property type="evidence" value="ECO:0007669"/>
    <property type="project" value="UniProtKB-KW"/>
</dbReference>
<dbReference type="Gene3D" id="3.80.10.10">
    <property type="entry name" value="Ribonuclease Inhibitor"/>
    <property type="match status" value="1"/>
</dbReference>
<dbReference type="InterPro" id="IPR001611">
    <property type="entry name" value="Leu-rich_rpt"/>
</dbReference>
<dbReference type="InterPro" id="IPR032675">
    <property type="entry name" value="LRR_dom_sf"/>
</dbReference>
<dbReference type="InterPro" id="IPR040091">
    <property type="entry name" value="LRRC56"/>
</dbReference>
<dbReference type="PANTHER" id="PTHR22708">
    <property type="entry name" value="LEUCINE-RICH REPEAT-CONTAINING PROTEIN 56"/>
    <property type="match status" value="1"/>
</dbReference>
<dbReference type="PANTHER" id="PTHR22708:SF0">
    <property type="entry name" value="LEUCINE-RICH REPEAT-CONTAINING PROTEIN 56"/>
    <property type="match status" value="1"/>
</dbReference>
<dbReference type="SUPFAM" id="SSF52058">
    <property type="entry name" value="L domain-like"/>
    <property type="match status" value="1"/>
</dbReference>
<dbReference type="PROSITE" id="PS51450">
    <property type="entry name" value="LRR"/>
    <property type="match status" value="5"/>
</dbReference>
<accession>Q387Y5</accession>
<gene>
    <name evidence="6" type="ORF">Tb10.61.1230</name>
    <name evidence="4" type="ORF">Tb927.10.15260</name>
</gene>
<feature type="chain" id="PRO_0000447545" description="Leucine-rich repeat-containing protein 56 homolog">
    <location>
        <begin position="1"/>
        <end position="751"/>
    </location>
</feature>
<feature type="repeat" description="LRR 1" evidence="1">
    <location>
        <begin position="210"/>
        <end position="235"/>
    </location>
</feature>
<feature type="repeat" description="LRR 2" evidence="1">
    <location>
        <begin position="236"/>
        <end position="256"/>
    </location>
</feature>
<feature type="repeat" description="LRR 3" evidence="1">
    <location>
        <begin position="258"/>
        <end position="279"/>
    </location>
</feature>
<feature type="repeat" description="LRR 4" evidence="1">
    <location>
        <begin position="280"/>
        <end position="304"/>
    </location>
</feature>
<feature type="repeat" description="LRR 5" evidence="1">
    <location>
        <begin position="307"/>
        <end position="328"/>
    </location>
</feature>
<feature type="region of interest" description="Disordered" evidence="2">
    <location>
        <begin position="1"/>
        <end position="149"/>
    </location>
</feature>
<feature type="region of interest" description="Disordered" evidence="2">
    <location>
        <begin position="430"/>
        <end position="538"/>
    </location>
</feature>
<feature type="region of interest" description="Disordered" evidence="2">
    <location>
        <begin position="645"/>
        <end position="698"/>
    </location>
</feature>
<feature type="region of interest" description="Disordered" evidence="2">
    <location>
        <begin position="717"/>
        <end position="751"/>
    </location>
</feature>
<feature type="compositionally biased region" description="Pro residues" evidence="2">
    <location>
        <begin position="13"/>
        <end position="22"/>
    </location>
</feature>
<feature type="compositionally biased region" description="Polar residues" evidence="2">
    <location>
        <begin position="28"/>
        <end position="39"/>
    </location>
</feature>
<feature type="compositionally biased region" description="Polar residues" evidence="2">
    <location>
        <begin position="60"/>
        <end position="87"/>
    </location>
</feature>
<feature type="compositionally biased region" description="Polar residues" evidence="2">
    <location>
        <begin position="456"/>
        <end position="471"/>
    </location>
</feature>
<feature type="compositionally biased region" description="Polar residues" evidence="2">
    <location>
        <begin position="662"/>
        <end position="671"/>
    </location>
</feature>
<feature type="compositionally biased region" description="Basic and acidic residues" evidence="2">
    <location>
        <begin position="717"/>
        <end position="738"/>
    </location>
</feature>
<feature type="compositionally biased region" description="Acidic residues" evidence="2">
    <location>
        <begin position="739"/>
        <end position="751"/>
    </location>
</feature>
<feature type="mutagenesis site" description="Reduced cell motility and reduced number of outer dynein arms. Localizes normally to the distal portion of the flagellum." evidence="3">
    <original>L</original>
    <variation>P</variation>
    <location>
        <position position="259"/>
    </location>
</feature>
<comment type="function">
    <text evidence="3">Required for the assembly of dynein arms in the distal portion of flagellum axoneme.</text>
</comment>
<comment type="subcellular location">
    <subcellularLocation>
        <location evidence="3">Cell projection</location>
        <location evidence="3">Cilium</location>
        <location evidence="3">Flagellum</location>
    </subcellularLocation>
    <text evidence="3">Localizes to the distal portion of the flagellum.</text>
</comment>
<comment type="disruption phenotype">
    <text evidence="3">Gene knockout results in significant reduction of flagellar beating and cell swimming, and absence of outer dynein arms in the distal region of flagellum axoneme. Cell motility is characterized by an erratic swimming pattern with altered propagation of the tip-to-base wave, increased frequency of base-to-tip waves, and frequent tumbling typical of outer dynein arm mutants.</text>
</comment>
<comment type="similarity">
    <text evidence="5">Belongs to the LRRC56 family.</text>
</comment>